<reference key="1">
    <citation type="journal article" date="2004" name="Science">
        <title>The Ashbya gossypii genome as a tool for mapping the ancient Saccharomyces cerevisiae genome.</title>
        <authorList>
            <person name="Dietrich F.S."/>
            <person name="Voegeli S."/>
            <person name="Brachat S."/>
            <person name="Lerch A."/>
            <person name="Gates K."/>
            <person name="Steiner S."/>
            <person name="Mohr C."/>
            <person name="Poehlmann R."/>
            <person name="Luedi P."/>
            <person name="Choi S."/>
            <person name="Wing R.A."/>
            <person name="Flavier A."/>
            <person name="Gaffney T.D."/>
            <person name="Philippsen P."/>
        </authorList>
    </citation>
    <scope>NUCLEOTIDE SEQUENCE [LARGE SCALE GENOMIC DNA]</scope>
    <source>
        <strain>ATCC 10895 / CBS 109.51 / FGSC 9923 / NRRL Y-1056</strain>
    </source>
</reference>
<reference key="2">
    <citation type="journal article" date="2013" name="G3 (Bethesda)">
        <title>Genomes of Ashbya fungi isolated from insects reveal four mating-type loci, numerous translocations, lack of transposons, and distinct gene duplications.</title>
        <authorList>
            <person name="Dietrich F.S."/>
            <person name="Voegeli S."/>
            <person name="Kuo S."/>
            <person name="Philippsen P."/>
        </authorList>
    </citation>
    <scope>GENOME REANNOTATION</scope>
    <source>
        <strain>ATCC 10895 / CBS 109.51 / FGSC 9923 / NRRL Y-1056</strain>
    </source>
</reference>
<organism>
    <name type="scientific">Eremothecium gossypii (strain ATCC 10895 / CBS 109.51 / FGSC 9923 / NRRL Y-1056)</name>
    <name type="common">Yeast</name>
    <name type="synonym">Ashbya gossypii</name>
    <dbReference type="NCBI Taxonomy" id="284811"/>
    <lineage>
        <taxon>Eukaryota</taxon>
        <taxon>Fungi</taxon>
        <taxon>Dikarya</taxon>
        <taxon>Ascomycota</taxon>
        <taxon>Saccharomycotina</taxon>
        <taxon>Saccharomycetes</taxon>
        <taxon>Saccharomycetales</taxon>
        <taxon>Saccharomycetaceae</taxon>
        <taxon>Eremothecium</taxon>
    </lineage>
</organism>
<name>TFB4_EREGS</name>
<protein>
    <recommendedName>
        <fullName>General transcription and DNA repair factor IIH subunit TFB4</fullName>
        <shortName>TFIIH subunit TFB4</shortName>
    </recommendedName>
    <alternativeName>
        <fullName>RNA polymerase II transcription factor B subunit 4</fullName>
    </alternativeName>
</protein>
<accession>Q75B93</accession>
<feature type="chain" id="PRO_0000119269" description="General transcription and DNA repair factor IIH subunit TFB4">
    <location>
        <begin position="1"/>
        <end position="341"/>
    </location>
</feature>
<feature type="zinc finger region" description="C4-type">
    <location>
        <begin position="290"/>
        <end position="309"/>
    </location>
</feature>
<comment type="function">
    <text evidence="2">Component of the general transcription and DNA repair factor IIH (TFIIH) core complex, which is involved in general and transcription-coupled nucleotide excision repair (NER) of damaged DNA and, when complexed to TFIIK, in RNA transcription by RNA polymerase II. In NER, TFIIH acts by opening DNA around the lesion to allow the excision of the damaged oligonucleotide and its replacement by a new DNA fragment. In transcription, TFIIH has an essential role in transcription initiation. When the pre-initiation complex (PIC) has been established, TFIIH is required for promoter opening and promoter escape. Phosphorylation of the C-terminal tail (CTD) of the largest subunit of RNA polymerase II by the kinase module TFIIK controls the initiation of transcription.</text>
</comment>
<comment type="subunit">
    <text evidence="2">Component of the 7-subunit TFIIH core complex composed of XPB/SSL2, XPD/RAD3, SSL1, TFB1, TFB2, TFB4 and TFB5, which is active in NER. The core complex associates with the 3-subunit CTD-kinase module TFIIK composed of CCL1, KIN28 and TFB3 to form the 10-subunit holoenzyme (holo-TFIIH) active in transcription.</text>
</comment>
<comment type="subcellular location">
    <subcellularLocation>
        <location evidence="1">Nucleus</location>
    </subcellularLocation>
</comment>
<comment type="similarity">
    <text evidence="3">Belongs to the TFB4 family.</text>
</comment>
<sequence length="341" mass="37863">MDAIADSTFQINKSKVQLVEETPSLLTLVIDTNPKLWAEFDREVGKKGQLMQVLKSTIVFLNAHLSFNNSNQVSVIAACSRGIKYLYPQADDKEGSTKKKKSEDRSIINRNMYRGFRNVDEAVVEELYRVFQQESKQLEDGVPQPFRSTLSGAMSAGLTYINRITHETEGVSLKSRLLVITCGSSASKDEVFQYIPIMNCIFSATKMKCPIDVVKVGGVKESTFLQQATDATNGNYLHVANTDGLIQYLSTAMFIDPSLRQWVVKPNQSSVDFRTSCYLTGKVVAIGFVCSVCLCVLSIIPPGNKCPACDSEFDEKVVAKLSRKPVITGTLRKKKKKKVTK</sequence>
<gene>
    <name type="primary">TFB4</name>
    <name type="ordered locus">ADL323C</name>
</gene>
<dbReference type="EMBL" id="AE016817">
    <property type="protein sequence ID" value="AAS51597.1"/>
    <property type="molecule type" value="Genomic_DNA"/>
</dbReference>
<dbReference type="RefSeq" id="NP_983773.1">
    <property type="nucleotide sequence ID" value="NM_209126.1"/>
</dbReference>
<dbReference type="SMR" id="Q75B93"/>
<dbReference type="FunCoup" id="Q75B93">
    <property type="interactions" value="1216"/>
</dbReference>
<dbReference type="STRING" id="284811.Q75B93"/>
<dbReference type="EnsemblFungi" id="AAS51597">
    <property type="protein sequence ID" value="AAS51597"/>
    <property type="gene ID" value="AGOS_ADL323C"/>
</dbReference>
<dbReference type="GeneID" id="4619908"/>
<dbReference type="KEGG" id="ago:AGOS_ADL323C"/>
<dbReference type="eggNOG" id="KOG2487">
    <property type="taxonomic scope" value="Eukaryota"/>
</dbReference>
<dbReference type="HOGENOM" id="CLU_040211_0_0_1"/>
<dbReference type="InParanoid" id="Q75B93"/>
<dbReference type="OMA" id="QGCDITS"/>
<dbReference type="OrthoDB" id="17307at2759"/>
<dbReference type="Proteomes" id="UP000000591">
    <property type="component" value="Chromosome IV"/>
</dbReference>
<dbReference type="GO" id="GO:0000112">
    <property type="term" value="C:nucleotide-excision repair factor 3 complex"/>
    <property type="evidence" value="ECO:0007669"/>
    <property type="project" value="EnsemblFungi"/>
</dbReference>
<dbReference type="GO" id="GO:0000439">
    <property type="term" value="C:transcription factor TFIIH core complex"/>
    <property type="evidence" value="ECO:0000318"/>
    <property type="project" value="GO_Central"/>
</dbReference>
<dbReference type="GO" id="GO:0005675">
    <property type="term" value="C:transcription factor TFIIH holo complex"/>
    <property type="evidence" value="ECO:0000318"/>
    <property type="project" value="GO_Central"/>
</dbReference>
<dbReference type="GO" id="GO:0008270">
    <property type="term" value="F:zinc ion binding"/>
    <property type="evidence" value="ECO:0007669"/>
    <property type="project" value="UniProtKB-KW"/>
</dbReference>
<dbReference type="GO" id="GO:0006289">
    <property type="term" value="P:nucleotide-excision repair"/>
    <property type="evidence" value="ECO:0000318"/>
    <property type="project" value="GO_Central"/>
</dbReference>
<dbReference type="GO" id="GO:0006355">
    <property type="term" value="P:regulation of DNA-templated transcription"/>
    <property type="evidence" value="ECO:0007669"/>
    <property type="project" value="InterPro"/>
</dbReference>
<dbReference type="GO" id="GO:0006367">
    <property type="term" value="P:transcription initiation at RNA polymerase II promoter"/>
    <property type="evidence" value="ECO:0007669"/>
    <property type="project" value="EnsemblFungi"/>
</dbReference>
<dbReference type="FunFam" id="3.40.50.410:FF:000093">
    <property type="entry name" value="Transcription initiation factor TFIIH subunit"/>
    <property type="match status" value="1"/>
</dbReference>
<dbReference type="Gene3D" id="3.40.50.410">
    <property type="entry name" value="von Willebrand factor, type A domain"/>
    <property type="match status" value="1"/>
</dbReference>
<dbReference type="InterPro" id="IPR004600">
    <property type="entry name" value="TFIIH_Tfb4/GTF2H3"/>
</dbReference>
<dbReference type="InterPro" id="IPR036465">
    <property type="entry name" value="vWFA_dom_sf"/>
</dbReference>
<dbReference type="NCBIfam" id="TIGR00627">
    <property type="entry name" value="tfb4"/>
    <property type="match status" value="1"/>
</dbReference>
<dbReference type="PANTHER" id="PTHR12831:SF0">
    <property type="entry name" value="GENERAL TRANSCRIPTION FACTOR IIH SUBUNIT 3"/>
    <property type="match status" value="1"/>
</dbReference>
<dbReference type="PANTHER" id="PTHR12831">
    <property type="entry name" value="TRANSCRIPTION INITIATION FACTOR IIH TFIIH , POLYPEPTIDE 3-RELATED"/>
    <property type="match status" value="1"/>
</dbReference>
<dbReference type="Pfam" id="PF03850">
    <property type="entry name" value="Tfb4"/>
    <property type="match status" value="1"/>
</dbReference>
<keyword id="KW-0227">DNA damage</keyword>
<keyword id="KW-0234">DNA repair</keyword>
<keyword id="KW-0479">Metal-binding</keyword>
<keyword id="KW-0539">Nucleus</keyword>
<keyword id="KW-1185">Reference proteome</keyword>
<keyword id="KW-0804">Transcription</keyword>
<keyword id="KW-0805">Transcription regulation</keyword>
<keyword id="KW-0862">Zinc</keyword>
<keyword id="KW-0863">Zinc-finger</keyword>
<proteinExistence type="inferred from homology"/>
<evidence type="ECO:0000250" key="1"/>
<evidence type="ECO:0000250" key="2">
    <source>
        <dbReference type="UniProtKB" id="Q12004"/>
    </source>
</evidence>
<evidence type="ECO:0000305" key="3"/>